<sequence length="430" mass="47326">MPSVVVVGTQWGDEGKGKITDFLSSNAEVIARYQGGDNAGHTIVIDGKKFKLHLIPSGIFFPEKISVIGNGVVVNPKSLIEEIAYLAENGVSAESLRISDRAHVILPYHKKLDFLQEEAKGDKKIGTTIKGIGPAYMDKAARVGIRVADLLDKEIFEERLRTNLEAKNREFVKMYDSEPIEFEEIFEEYYEYGQQLKKYVTDTSVILNDALDAGKRVLFEGAQGVMLDIDQGTYPFVTSSNPVAGGVTIGSGVGPSKISKVVGVCKAYTSRVGDGPFPTELFDEVGHQIREVGHEYGTTTGRPRRVGWFDSVVMRHAKRVSGLTNLSLNSIDVLSGLETVKICVAYERSNGEQITHYPASLKELADCKPIYEELPGWSEDITSCRTLEELPEAARNYVRRVGELVGVRISTFSVGPGREQTNVLESVWGV</sequence>
<evidence type="ECO:0000255" key="1">
    <source>
        <dbReference type="HAMAP-Rule" id="MF_00011"/>
    </source>
</evidence>
<reference key="1">
    <citation type="journal article" date="2001" name="Genome Res.">
        <title>The complete genome sequence of the lactic acid bacterium Lactococcus lactis ssp. lactis IL1403.</title>
        <authorList>
            <person name="Bolotin A."/>
            <person name="Wincker P."/>
            <person name="Mauger S."/>
            <person name="Jaillon O."/>
            <person name="Malarme K."/>
            <person name="Weissenbach J."/>
            <person name="Ehrlich S.D."/>
            <person name="Sorokin A."/>
        </authorList>
    </citation>
    <scope>NUCLEOTIDE SEQUENCE [LARGE SCALE GENOMIC DNA]</scope>
    <source>
        <strain>IL1403</strain>
    </source>
</reference>
<proteinExistence type="inferred from homology"/>
<keyword id="KW-0963">Cytoplasm</keyword>
<keyword id="KW-0342">GTP-binding</keyword>
<keyword id="KW-0436">Ligase</keyword>
<keyword id="KW-0460">Magnesium</keyword>
<keyword id="KW-0479">Metal-binding</keyword>
<keyword id="KW-0547">Nucleotide-binding</keyword>
<keyword id="KW-0658">Purine biosynthesis</keyword>
<keyword id="KW-1185">Reference proteome</keyword>
<gene>
    <name evidence="1" type="primary">purA</name>
    <name type="ordered locus">LL1952</name>
    <name type="ORF">L12179</name>
</gene>
<accession>Q9CE93</accession>
<dbReference type="EC" id="6.3.4.4" evidence="1"/>
<dbReference type="EMBL" id="AE005176">
    <property type="protein sequence ID" value="AAK06050.1"/>
    <property type="molecule type" value="Genomic_DNA"/>
</dbReference>
<dbReference type="PIR" id="H86868">
    <property type="entry name" value="H86868"/>
</dbReference>
<dbReference type="RefSeq" id="NP_268109.1">
    <property type="nucleotide sequence ID" value="NC_002662.1"/>
</dbReference>
<dbReference type="RefSeq" id="WP_004254838.1">
    <property type="nucleotide sequence ID" value="NC_002662.1"/>
</dbReference>
<dbReference type="SMR" id="Q9CE93"/>
<dbReference type="PaxDb" id="272623-L12179"/>
<dbReference type="EnsemblBacteria" id="AAK06050">
    <property type="protein sequence ID" value="AAK06050"/>
    <property type="gene ID" value="L12179"/>
</dbReference>
<dbReference type="KEGG" id="lla:L12179"/>
<dbReference type="PATRIC" id="fig|272623.7.peg.2101"/>
<dbReference type="eggNOG" id="COG0104">
    <property type="taxonomic scope" value="Bacteria"/>
</dbReference>
<dbReference type="HOGENOM" id="CLU_029848_0_0_9"/>
<dbReference type="OrthoDB" id="9807553at2"/>
<dbReference type="UniPathway" id="UPA00075">
    <property type="reaction ID" value="UER00335"/>
</dbReference>
<dbReference type="Proteomes" id="UP000002196">
    <property type="component" value="Chromosome"/>
</dbReference>
<dbReference type="GO" id="GO:0005737">
    <property type="term" value="C:cytoplasm"/>
    <property type="evidence" value="ECO:0007669"/>
    <property type="project" value="UniProtKB-SubCell"/>
</dbReference>
<dbReference type="GO" id="GO:0004019">
    <property type="term" value="F:adenylosuccinate synthase activity"/>
    <property type="evidence" value="ECO:0007669"/>
    <property type="project" value="UniProtKB-UniRule"/>
</dbReference>
<dbReference type="GO" id="GO:0005525">
    <property type="term" value="F:GTP binding"/>
    <property type="evidence" value="ECO:0007669"/>
    <property type="project" value="UniProtKB-UniRule"/>
</dbReference>
<dbReference type="GO" id="GO:0000287">
    <property type="term" value="F:magnesium ion binding"/>
    <property type="evidence" value="ECO:0007669"/>
    <property type="project" value="UniProtKB-UniRule"/>
</dbReference>
<dbReference type="GO" id="GO:0044208">
    <property type="term" value="P:'de novo' AMP biosynthetic process"/>
    <property type="evidence" value="ECO:0007669"/>
    <property type="project" value="UniProtKB-UniRule"/>
</dbReference>
<dbReference type="GO" id="GO:0046040">
    <property type="term" value="P:IMP metabolic process"/>
    <property type="evidence" value="ECO:0007669"/>
    <property type="project" value="TreeGrafter"/>
</dbReference>
<dbReference type="CDD" id="cd03108">
    <property type="entry name" value="AdSS"/>
    <property type="match status" value="1"/>
</dbReference>
<dbReference type="FunFam" id="1.10.300.10:FF:000001">
    <property type="entry name" value="Adenylosuccinate synthetase"/>
    <property type="match status" value="1"/>
</dbReference>
<dbReference type="FunFam" id="3.90.170.10:FF:000001">
    <property type="entry name" value="Adenylosuccinate synthetase"/>
    <property type="match status" value="1"/>
</dbReference>
<dbReference type="Gene3D" id="3.40.440.10">
    <property type="entry name" value="Adenylosuccinate Synthetase, subunit A, domain 1"/>
    <property type="match status" value="1"/>
</dbReference>
<dbReference type="Gene3D" id="1.10.300.10">
    <property type="entry name" value="Adenylosuccinate Synthetase, subunit A, domain 2"/>
    <property type="match status" value="1"/>
</dbReference>
<dbReference type="Gene3D" id="3.90.170.10">
    <property type="entry name" value="Adenylosuccinate Synthetase, subunit A, domain 3"/>
    <property type="match status" value="1"/>
</dbReference>
<dbReference type="HAMAP" id="MF_00011">
    <property type="entry name" value="Adenylosucc_synth"/>
    <property type="match status" value="1"/>
</dbReference>
<dbReference type="InterPro" id="IPR018220">
    <property type="entry name" value="Adenylosuccin_syn_GTP-bd"/>
</dbReference>
<dbReference type="InterPro" id="IPR033128">
    <property type="entry name" value="Adenylosuccin_syn_Lys_AS"/>
</dbReference>
<dbReference type="InterPro" id="IPR042109">
    <property type="entry name" value="Adenylosuccinate_synth_dom1"/>
</dbReference>
<dbReference type="InterPro" id="IPR042110">
    <property type="entry name" value="Adenylosuccinate_synth_dom2"/>
</dbReference>
<dbReference type="InterPro" id="IPR042111">
    <property type="entry name" value="Adenylosuccinate_synth_dom3"/>
</dbReference>
<dbReference type="InterPro" id="IPR001114">
    <property type="entry name" value="Adenylosuccinate_synthetase"/>
</dbReference>
<dbReference type="InterPro" id="IPR027417">
    <property type="entry name" value="P-loop_NTPase"/>
</dbReference>
<dbReference type="NCBIfam" id="NF002223">
    <property type="entry name" value="PRK01117.1"/>
    <property type="match status" value="1"/>
</dbReference>
<dbReference type="NCBIfam" id="TIGR00184">
    <property type="entry name" value="purA"/>
    <property type="match status" value="1"/>
</dbReference>
<dbReference type="PANTHER" id="PTHR11846">
    <property type="entry name" value="ADENYLOSUCCINATE SYNTHETASE"/>
    <property type="match status" value="1"/>
</dbReference>
<dbReference type="PANTHER" id="PTHR11846:SF0">
    <property type="entry name" value="ADENYLOSUCCINATE SYNTHETASE"/>
    <property type="match status" value="1"/>
</dbReference>
<dbReference type="Pfam" id="PF00709">
    <property type="entry name" value="Adenylsucc_synt"/>
    <property type="match status" value="1"/>
</dbReference>
<dbReference type="SMART" id="SM00788">
    <property type="entry name" value="Adenylsucc_synt"/>
    <property type="match status" value="1"/>
</dbReference>
<dbReference type="SUPFAM" id="SSF52540">
    <property type="entry name" value="P-loop containing nucleoside triphosphate hydrolases"/>
    <property type="match status" value="1"/>
</dbReference>
<dbReference type="PROSITE" id="PS01266">
    <property type="entry name" value="ADENYLOSUCCIN_SYN_1"/>
    <property type="match status" value="1"/>
</dbReference>
<dbReference type="PROSITE" id="PS00513">
    <property type="entry name" value="ADENYLOSUCCIN_SYN_2"/>
    <property type="match status" value="1"/>
</dbReference>
<organism>
    <name type="scientific">Lactococcus lactis subsp. lactis (strain IL1403)</name>
    <name type="common">Streptococcus lactis</name>
    <dbReference type="NCBI Taxonomy" id="272623"/>
    <lineage>
        <taxon>Bacteria</taxon>
        <taxon>Bacillati</taxon>
        <taxon>Bacillota</taxon>
        <taxon>Bacilli</taxon>
        <taxon>Lactobacillales</taxon>
        <taxon>Streptococcaceae</taxon>
        <taxon>Lactococcus</taxon>
    </lineage>
</organism>
<comment type="function">
    <text evidence="1">Plays an important role in the de novo pathway of purine nucleotide biosynthesis. Catalyzes the first committed step in the biosynthesis of AMP from IMP.</text>
</comment>
<comment type="catalytic activity">
    <reaction evidence="1">
        <text>IMP + L-aspartate + GTP = N(6)-(1,2-dicarboxyethyl)-AMP + GDP + phosphate + 2 H(+)</text>
        <dbReference type="Rhea" id="RHEA:15753"/>
        <dbReference type="ChEBI" id="CHEBI:15378"/>
        <dbReference type="ChEBI" id="CHEBI:29991"/>
        <dbReference type="ChEBI" id="CHEBI:37565"/>
        <dbReference type="ChEBI" id="CHEBI:43474"/>
        <dbReference type="ChEBI" id="CHEBI:57567"/>
        <dbReference type="ChEBI" id="CHEBI:58053"/>
        <dbReference type="ChEBI" id="CHEBI:58189"/>
        <dbReference type="EC" id="6.3.4.4"/>
    </reaction>
</comment>
<comment type="cofactor">
    <cofactor evidence="1">
        <name>Mg(2+)</name>
        <dbReference type="ChEBI" id="CHEBI:18420"/>
    </cofactor>
    <text evidence="1">Binds 1 Mg(2+) ion per subunit.</text>
</comment>
<comment type="pathway">
    <text evidence="1">Purine metabolism; AMP biosynthesis via de novo pathway; AMP from IMP: step 1/2.</text>
</comment>
<comment type="subunit">
    <text evidence="1">Homodimer.</text>
</comment>
<comment type="subcellular location">
    <subcellularLocation>
        <location evidence="1">Cytoplasm</location>
    </subcellularLocation>
</comment>
<comment type="similarity">
    <text evidence="1">Belongs to the adenylosuccinate synthetase family.</text>
</comment>
<feature type="chain" id="PRO_0000095188" description="Adenylosuccinate synthetase">
    <location>
        <begin position="1"/>
        <end position="430"/>
    </location>
</feature>
<feature type="active site" description="Proton acceptor" evidence="1">
    <location>
        <position position="13"/>
    </location>
</feature>
<feature type="active site" description="Proton donor" evidence="1">
    <location>
        <position position="41"/>
    </location>
</feature>
<feature type="binding site" evidence="1">
    <location>
        <begin position="12"/>
        <end position="18"/>
    </location>
    <ligand>
        <name>GTP</name>
        <dbReference type="ChEBI" id="CHEBI:37565"/>
    </ligand>
</feature>
<feature type="binding site" description="in other chain" evidence="1">
    <location>
        <begin position="13"/>
        <end position="16"/>
    </location>
    <ligand>
        <name>IMP</name>
        <dbReference type="ChEBI" id="CHEBI:58053"/>
        <note>ligand shared between dimeric partners</note>
    </ligand>
</feature>
<feature type="binding site" evidence="1">
    <location>
        <position position="13"/>
    </location>
    <ligand>
        <name>Mg(2+)</name>
        <dbReference type="ChEBI" id="CHEBI:18420"/>
    </ligand>
</feature>
<feature type="binding site" description="in other chain" evidence="1">
    <location>
        <begin position="38"/>
        <end position="41"/>
    </location>
    <ligand>
        <name>IMP</name>
        <dbReference type="ChEBI" id="CHEBI:58053"/>
        <note>ligand shared between dimeric partners</note>
    </ligand>
</feature>
<feature type="binding site" evidence="1">
    <location>
        <begin position="40"/>
        <end position="42"/>
    </location>
    <ligand>
        <name>GTP</name>
        <dbReference type="ChEBI" id="CHEBI:37565"/>
    </ligand>
</feature>
<feature type="binding site" evidence="1">
    <location>
        <position position="40"/>
    </location>
    <ligand>
        <name>Mg(2+)</name>
        <dbReference type="ChEBI" id="CHEBI:18420"/>
    </ligand>
</feature>
<feature type="binding site" description="in other chain" evidence="1">
    <location>
        <position position="128"/>
    </location>
    <ligand>
        <name>IMP</name>
        <dbReference type="ChEBI" id="CHEBI:58053"/>
        <note>ligand shared between dimeric partners</note>
    </ligand>
</feature>
<feature type="binding site" evidence="1">
    <location>
        <position position="142"/>
    </location>
    <ligand>
        <name>IMP</name>
        <dbReference type="ChEBI" id="CHEBI:58053"/>
        <note>ligand shared between dimeric partners</note>
    </ligand>
</feature>
<feature type="binding site" description="in other chain" evidence="1">
    <location>
        <position position="223"/>
    </location>
    <ligand>
        <name>IMP</name>
        <dbReference type="ChEBI" id="CHEBI:58053"/>
        <note>ligand shared between dimeric partners</note>
    </ligand>
</feature>
<feature type="binding site" description="in other chain" evidence="1">
    <location>
        <position position="238"/>
    </location>
    <ligand>
        <name>IMP</name>
        <dbReference type="ChEBI" id="CHEBI:58053"/>
        <note>ligand shared between dimeric partners</note>
    </ligand>
</feature>
<feature type="binding site" evidence="1">
    <location>
        <begin position="298"/>
        <end position="304"/>
    </location>
    <ligand>
        <name>substrate</name>
    </ligand>
</feature>
<feature type="binding site" description="in other chain" evidence="1">
    <location>
        <position position="302"/>
    </location>
    <ligand>
        <name>IMP</name>
        <dbReference type="ChEBI" id="CHEBI:58053"/>
        <note>ligand shared between dimeric partners</note>
    </ligand>
</feature>
<feature type="binding site" evidence="1">
    <location>
        <position position="304"/>
    </location>
    <ligand>
        <name>GTP</name>
        <dbReference type="ChEBI" id="CHEBI:37565"/>
    </ligand>
</feature>
<feature type="binding site" evidence="1">
    <location>
        <begin position="330"/>
        <end position="332"/>
    </location>
    <ligand>
        <name>GTP</name>
        <dbReference type="ChEBI" id="CHEBI:37565"/>
    </ligand>
</feature>
<feature type="binding site" evidence="1">
    <location>
        <begin position="413"/>
        <end position="415"/>
    </location>
    <ligand>
        <name>GTP</name>
        <dbReference type="ChEBI" id="CHEBI:37565"/>
    </ligand>
</feature>
<name>PURA_LACLA</name>
<protein>
    <recommendedName>
        <fullName evidence="1">Adenylosuccinate synthetase</fullName>
        <shortName evidence="1">AMPSase</shortName>
        <shortName evidence="1">AdSS</shortName>
        <ecNumber evidence="1">6.3.4.4</ecNumber>
    </recommendedName>
    <alternativeName>
        <fullName evidence="1">IMP--aspartate ligase</fullName>
    </alternativeName>
</protein>